<comment type="function">
    <text evidence="1">Participates in both the initiation and recycling phases of transcription. In the presence of the delta subunit, RNAP displays an increased specificity of transcription, a decreased affinity for nucleic acids, and an increased efficiency of RNA synthesis because of enhanced recycling.</text>
</comment>
<comment type="subunit">
    <text evidence="1">RNAP is composed of a core of 2 alpha, a beta and a beta' subunits. The core is associated with a delta subunit and one of several sigma factors.</text>
</comment>
<comment type="similarity">
    <text evidence="1">Belongs to the RpoE family.</text>
</comment>
<organism>
    <name type="scientific">Streptococcus thermophilus (strain ATCC BAA-250 / LMG 18311)</name>
    <dbReference type="NCBI Taxonomy" id="264199"/>
    <lineage>
        <taxon>Bacteria</taxon>
        <taxon>Bacillati</taxon>
        <taxon>Bacillota</taxon>
        <taxon>Bacilli</taxon>
        <taxon>Lactobacillales</taxon>
        <taxon>Streptococcaceae</taxon>
        <taxon>Streptococcus</taxon>
    </lineage>
</organism>
<reference key="1">
    <citation type="journal article" date="2004" name="Nat. Biotechnol.">
        <title>Complete sequence and comparative genome analysis of the dairy bacterium Streptococcus thermophilus.</title>
        <authorList>
            <person name="Bolotin A."/>
            <person name="Quinquis B."/>
            <person name="Renault P."/>
            <person name="Sorokin A."/>
            <person name="Ehrlich S.D."/>
            <person name="Kulakauskas S."/>
            <person name="Lapidus A."/>
            <person name="Goltsman E."/>
            <person name="Mazur M."/>
            <person name="Pusch G.D."/>
            <person name="Fonstein M."/>
            <person name="Overbeek R."/>
            <person name="Kyprides N."/>
            <person name="Purnelle B."/>
            <person name="Prozzi D."/>
            <person name="Ngui K."/>
            <person name="Masuy D."/>
            <person name="Hancy F."/>
            <person name="Burteau S."/>
            <person name="Boutry M."/>
            <person name="Delcour J."/>
            <person name="Goffeau A."/>
            <person name="Hols P."/>
        </authorList>
    </citation>
    <scope>NUCLEOTIDE SEQUENCE [LARGE SCALE GENOMIC DNA]</scope>
    <source>
        <strain>ATCC BAA-250 / LMG 18311</strain>
    </source>
</reference>
<keyword id="KW-0240">DNA-directed RNA polymerase</keyword>
<keyword id="KW-0548">Nucleotidyltransferase</keyword>
<keyword id="KW-1185">Reference proteome</keyword>
<keyword id="KW-0804">Transcription</keyword>
<keyword id="KW-0808">Transferase</keyword>
<sequence>MELDVFAGQEKSELSMIEVARAILETRGRDKEMYFNDLVNEIQNYLEKSDADIRSSLPFFYSDLNTDGSFIPLGDNKWGLRSWYAIDEIDEEVITLEDIDENAPKRKNKKVNAFMDGDEDAIDYNDDDPEDENFTPSSAILEYDNDNEDDENAEVESYDSELNEIIPDDDLDDVELSEEDDDDDDDYEDETND</sequence>
<proteinExistence type="inferred from homology"/>
<feature type="chain" id="PRO_0000303147" description="Probable DNA-directed RNA polymerase subunit delta">
    <location>
        <begin position="1"/>
        <end position="193"/>
    </location>
</feature>
<feature type="domain" description="HTH HARE-type" evidence="2">
    <location>
        <begin position="14"/>
        <end position="83"/>
    </location>
</feature>
<feature type="region of interest" description="Disordered" evidence="3">
    <location>
        <begin position="119"/>
        <end position="193"/>
    </location>
</feature>
<feature type="compositionally biased region" description="Acidic residues" evidence="3">
    <location>
        <begin position="119"/>
        <end position="133"/>
    </location>
</feature>
<feature type="compositionally biased region" description="Acidic residues" evidence="3">
    <location>
        <begin position="143"/>
        <end position="193"/>
    </location>
</feature>
<dbReference type="EMBL" id="CP000023">
    <property type="protein sequence ID" value="AAV59858.1"/>
    <property type="molecule type" value="Genomic_DNA"/>
</dbReference>
<dbReference type="RefSeq" id="WP_011225340.1">
    <property type="nucleotide sequence ID" value="NC_006448.1"/>
</dbReference>
<dbReference type="SMR" id="Q5M6C1"/>
<dbReference type="STRING" id="264199.stu0133"/>
<dbReference type="GeneID" id="66898079"/>
<dbReference type="KEGG" id="stl:stu0133"/>
<dbReference type="PATRIC" id="fig|264199.4.peg.139"/>
<dbReference type="eggNOG" id="COG3343">
    <property type="taxonomic scope" value="Bacteria"/>
</dbReference>
<dbReference type="HOGENOM" id="CLU_116648_0_0_9"/>
<dbReference type="Proteomes" id="UP000001170">
    <property type="component" value="Chromosome"/>
</dbReference>
<dbReference type="GO" id="GO:0000428">
    <property type="term" value="C:DNA-directed RNA polymerase complex"/>
    <property type="evidence" value="ECO:0007669"/>
    <property type="project" value="UniProtKB-KW"/>
</dbReference>
<dbReference type="GO" id="GO:0003899">
    <property type="term" value="F:DNA-directed RNA polymerase activity"/>
    <property type="evidence" value="ECO:0007669"/>
    <property type="project" value="UniProtKB-UniRule"/>
</dbReference>
<dbReference type="GO" id="GO:0006351">
    <property type="term" value="P:DNA-templated transcription"/>
    <property type="evidence" value="ECO:0007669"/>
    <property type="project" value="InterPro"/>
</dbReference>
<dbReference type="GO" id="GO:0006355">
    <property type="term" value="P:regulation of DNA-templated transcription"/>
    <property type="evidence" value="ECO:0007669"/>
    <property type="project" value="UniProtKB-UniRule"/>
</dbReference>
<dbReference type="Gene3D" id="1.10.10.1250">
    <property type="entry name" value="RNA polymerase, subunit delta, N-terminal domain"/>
    <property type="match status" value="1"/>
</dbReference>
<dbReference type="HAMAP" id="MF_00357">
    <property type="entry name" value="RNApol_bact_RpoE"/>
    <property type="match status" value="1"/>
</dbReference>
<dbReference type="InterPro" id="IPR007759">
    <property type="entry name" value="Asxl_HARE-HTH"/>
</dbReference>
<dbReference type="InterPro" id="IPR038087">
    <property type="entry name" value="RNAP_delta_N_dom_sf"/>
</dbReference>
<dbReference type="InterPro" id="IPR029757">
    <property type="entry name" value="RpoE"/>
</dbReference>
<dbReference type="NCBIfam" id="TIGR04567">
    <property type="entry name" value="RNAP_delt_lowGC"/>
    <property type="match status" value="1"/>
</dbReference>
<dbReference type="Pfam" id="PF05066">
    <property type="entry name" value="HARE-HTH"/>
    <property type="match status" value="1"/>
</dbReference>
<dbReference type="PROSITE" id="PS51913">
    <property type="entry name" value="HTH_HARE"/>
    <property type="match status" value="1"/>
</dbReference>
<protein>
    <recommendedName>
        <fullName evidence="1">Probable DNA-directed RNA polymerase subunit delta</fullName>
    </recommendedName>
    <alternativeName>
        <fullName evidence="1">RNAP delta factor</fullName>
    </alternativeName>
</protein>
<name>RPOE_STRT2</name>
<evidence type="ECO:0000255" key="1">
    <source>
        <dbReference type="HAMAP-Rule" id="MF_00357"/>
    </source>
</evidence>
<evidence type="ECO:0000255" key="2">
    <source>
        <dbReference type="PROSITE-ProRule" id="PRU01261"/>
    </source>
</evidence>
<evidence type="ECO:0000256" key="3">
    <source>
        <dbReference type="SAM" id="MobiDB-lite"/>
    </source>
</evidence>
<accession>Q5M6C1</accession>
<gene>
    <name evidence="1" type="primary">rpoE</name>
    <name type="ordered locus">stu0133</name>
</gene>